<dbReference type="EC" id="5.3.1.16" evidence="1"/>
<dbReference type="EMBL" id="AE015451">
    <property type="protein sequence ID" value="AAN65923.1"/>
    <property type="molecule type" value="Genomic_DNA"/>
</dbReference>
<dbReference type="RefSeq" id="NP_742459.1">
    <property type="nucleotide sequence ID" value="NC_002947.4"/>
</dbReference>
<dbReference type="RefSeq" id="WP_003255731.1">
    <property type="nucleotide sequence ID" value="NZ_CP169744.1"/>
</dbReference>
<dbReference type="SMR" id="Q88R42"/>
<dbReference type="STRING" id="160488.PP_0292"/>
<dbReference type="PaxDb" id="160488-PP_0292"/>
<dbReference type="GeneID" id="83677565"/>
<dbReference type="KEGG" id="ppu:PP_0292"/>
<dbReference type="PATRIC" id="fig|160488.4.peg.317"/>
<dbReference type="eggNOG" id="COG0106">
    <property type="taxonomic scope" value="Bacteria"/>
</dbReference>
<dbReference type="HOGENOM" id="CLU_048577_1_1_6"/>
<dbReference type="OrthoDB" id="9807749at2"/>
<dbReference type="PhylomeDB" id="Q88R42"/>
<dbReference type="BioCyc" id="PPUT160488:G1G01-323-MONOMER"/>
<dbReference type="UniPathway" id="UPA00031">
    <property type="reaction ID" value="UER00009"/>
</dbReference>
<dbReference type="Proteomes" id="UP000000556">
    <property type="component" value="Chromosome"/>
</dbReference>
<dbReference type="GO" id="GO:0005737">
    <property type="term" value="C:cytoplasm"/>
    <property type="evidence" value="ECO:0007669"/>
    <property type="project" value="UniProtKB-SubCell"/>
</dbReference>
<dbReference type="GO" id="GO:0003949">
    <property type="term" value="F:1-(5-phosphoribosyl)-5-[(5-phosphoribosylamino)methylideneamino]imidazole-4-carboxamide isomerase activity"/>
    <property type="evidence" value="ECO:0007669"/>
    <property type="project" value="UniProtKB-UniRule"/>
</dbReference>
<dbReference type="GO" id="GO:0000105">
    <property type="term" value="P:L-histidine biosynthetic process"/>
    <property type="evidence" value="ECO:0007669"/>
    <property type="project" value="UniProtKB-UniRule"/>
</dbReference>
<dbReference type="GO" id="GO:0000162">
    <property type="term" value="P:L-tryptophan biosynthetic process"/>
    <property type="evidence" value="ECO:0007669"/>
    <property type="project" value="TreeGrafter"/>
</dbReference>
<dbReference type="CDD" id="cd04732">
    <property type="entry name" value="HisA"/>
    <property type="match status" value="1"/>
</dbReference>
<dbReference type="FunFam" id="3.20.20.70:FF:000009">
    <property type="entry name" value="1-(5-phosphoribosyl)-5-[(5-phosphoribosylamino)methylideneamino] imidazole-4-carboxamide isomerase"/>
    <property type="match status" value="1"/>
</dbReference>
<dbReference type="Gene3D" id="3.20.20.70">
    <property type="entry name" value="Aldolase class I"/>
    <property type="match status" value="1"/>
</dbReference>
<dbReference type="HAMAP" id="MF_01014">
    <property type="entry name" value="HisA"/>
    <property type="match status" value="1"/>
</dbReference>
<dbReference type="InterPro" id="IPR013785">
    <property type="entry name" value="Aldolase_TIM"/>
</dbReference>
<dbReference type="InterPro" id="IPR006062">
    <property type="entry name" value="His_biosynth"/>
</dbReference>
<dbReference type="InterPro" id="IPR006063">
    <property type="entry name" value="HisA_bact_arch"/>
</dbReference>
<dbReference type="InterPro" id="IPR044524">
    <property type="entry name" value="Isoase_HisA-like"/>
</dbReference>
<dbReference type="InterPro" id="IPR023016">
    <property type="entry name" value="Isoase_HisA-like_bact"/>
</dbReference>
<dbReference type="InterPro" id="IPR011060">
    <property type="entry name" value="RibuloseP-bd_barrel"/>
</dbReference>
<dbReference type="NCBIfam" id="TIGR00007">
    <property type="entry name" value="1-(5-phosphoribosyl)-5-[(5-phosphoribosylamino)methylideneamino]imidazole-4-carboxamide isomerase"/>
    <property type="match status" value="1"/>
</dbReference>
<dbReference type="PANTHER" id="PTHR43090">
    <property type="entry name" value="1-(5-PHOSPHORIBOSYL)-5-[(5-PHOSPHORIBOSYLAMINO)METHYLIDENEAMINO] IMIDAZOLE-4-CARBOXAMIDE ISOMERASE"/>
    <property type="match status" value="1"/>
</dbReference>
<dbReference type="PANTHER" id="PTHR43090:SF2">
    <property type="entry name" value="1-(5-PHOSPHORIBOSYL)-5-[(5-PHOSPHORIBOSYLAMINO)METHYLIDENEAMINO] IMIDAZOLE-4-CARBOXAMIDE ISOMERASE"/>
    <property type="match status" value="1"/>
</dbReference>
<dbReference type="Pfam" id="PF00977">
    <property type="entry name" value="His_biosynth"/>
    <property type="match status" value="1"/>
</dbReference>
<dbReference type="SUPFAM" id="SSF51366">
    <property type="entry name" value="Ribulose-phoshate binding barrel"/>
    <property type="match status" value="1"/>
</dbReference>
<organism>
    <name type="scientific">Pseudomonas putida (strain ATCC 47054 / DSM 6125 / CFBP 8728 / NCIMB 11950 / KT2440)</name>
    <dbReference type="NCBI Taxonomy" id="160488"/>
    <lineage>
        <taxon>Bacteria</taxon>
        <taxon>Pseudomonadati</taxon>
        <taxon>Pseudomonadota</taxon>
        <taxon>Gammaproteobacteria</taxon>
        <taxon>Pseudomonadales</taxon>
        <taxon>Pseudomonadaceae</taxon>
        <taxon>Pseudomonas</taxon>
    </lineage>
</organism>
<keyword id="KW-0028">Amino-acid biosynthesis</keyword>
<keyword id="KW-0963">Cytoplasm</keyword>
<keyword id="KW-0368">Histidine biosynthesis</keyword>
<keyword id="KW-0413">Isomerase</keyword>
<keyword id="KW-1185">Reference proteome</keyword>
<reference key="1">
    <citation type="journal article" date="2002" name="Environ. Microbiol.">
        <title>Complete genome sequence and comparative analysis of the metabolically versatile Pseudomonas putida KT2440.</title>
        <authorList>
            <person name="Nelson K.E."/>
            <person name="Weinel C."/>
            <person name="Paulsen I.T."/>
            <person name="Dodson R.J."/>
            <person name="Hilbert H."/>
            <person name="Martins dos Santos V.A.P."/>
            <person name="Fouts D.E."/>
            <person name="Gill S.R."/>
            <person name="Pop M."/>
            <person name="Holmes M."/>
            <person name="Brinkac L.M."/>
            <person name="Beanan M.J."/>
            <person name="DeBoy R.T."/>
            <person name="Daugherty S.C."/>
            <person name="Kolonay J.F."/>
            <person name="Madupu R."/>
            <person name="Nelson W.C."/>
            <person name="White O."/>
            <person name="Peterson J.D."/>
            <person name="Khouri H.M."/>
            <person name="Hance I."/>
            <person name="Chris Lee P."/>
            <person name="Holtzapple E.K."/>
            <person name="Scanlan D."/>
            <person name="Tran K."/>
            <person name="Moazzez A."/>
            <person name="Utterback T.R."/>
            <person name="Rizzo M."/>
            <person name="Lee K."/>
            <person name="Kosack D."/>
            <person name="Moestl D."/>
            <person name="Wedler H."/>
            <person name="Lauber J."/>
            <person name="Stjepandic D."/>
            <person name="Hoheisel J."/>
            <person name="Straetz M."/>
            <person name="Heim S."/>
            <person name="Kiewitz C."/>
            <person name="Eisen J.A."/>
            <person name="Timmis K.N."/>
            <person name="Duesterhoeft A."/>
            <person name="Tuemmler B."/>
            <person name="Fraser C.M."/>
        </authorList>
    </citation>
    <scope>NUCLEOTIDE SEQUENCE [LARGE SCALE GENOMIC DNA]</scope>
    <source>
        <strain>ATCC 47054 / DSM 6125 / CFBP 8728 / NCIMB 11950 / KT2440</strain>
    </source>
</reference>
<sequence>MLIIPAIDLKDGACVRLRQGRMEDSTVFSDDPVSMAAKWVEGGCRRLHLVDLNGAFEGQPVNGEVVTAIAKRYPNLPIQIGGGIRSLETIEHYVKAGVSYVIIGTKAVKQPEFVAEACKAFPGKVIVGLDAKDGFVATDGWAEVSSVQVIDLAKRFEADGVSAIVYTDIAKDGMMQGCNVPFTKALAEATRIPVIASGGIHNLGDIKALLDAKAPGIIGAITGRAIYEGTLDVAEAQAFCDNYQG</sequence>
<name>HIS4_PSEPK</name>
<feature type="chain" id="PRO_0000142039" description="1-(5-phosphoribosyl)-5-[(5-phosphoribosylamino)methylideneamino] imidazole-4-carboxamide isomerase">
    <location>
        <begin position="1"/>
        <end position="245"/>
    </location>
</feature>
<feature type="active site" description="Proton acceptor" evidence="1">
    <location>
        <position position="8"/>
    </location>
</feature>
<feature type="active site" description="Proton donor" evidence="1">
    <location>
        <position position="130"/>
    </location>
</feature>
<protein>
    <recommendedName>
        <fullName evidence="1">1-(5-phosphoribosyl)-5-[(5-phosphoribosylamino)methylideneamino] imidazole-4-carboxamide isomerase</fullName>
        <ecNumber evidence="1">5.3.1.16</ecNumber>
    </recommendedName>
    <alternativeName>
        <fullName evidence="1">Phosphoribosylformimino-5-aminoimidazole carboxamide ribotide isomerase</fullName>
    </alternativeName>
</protein>
<comment type="catalytic activity">
    <reaction evidence="1">
        <text>1-(5-phospho-beta-D-ribosyl)-5-[(5-phospho-beta-D-ribosylamino)methylideneamino]imidazole-4-carboxamide = 5-[(5-phospho-1-deoxy-D-ribulos-1-ylimino)methylamino]-1-(5-phospho-beta-D-ribosyl)imidazole-4-carboxamide</text>
        <dbReference type="Rhea" id="RHEA:15469"/>
        <dbReference type="ChEBI" id="CHEBI:58435"/>
        <dbReference type="ChEBI" id="CHEBI:58525"/>
        <dbReference type="EC" id="5.3.1.16"/>
    </reaction>
</comment>
<comment type="pathway">
    <text evidence="1">Amino-acid biosynthesis; L-histidine biosynthesis; L-histidine from 5-phospho-alpha-D-ribose 1-diphosphate: step 4/9.</text>
</comment>
<comment type="subcellular location">
    <subcellularLocation>
        <location evidence="1">Cytoplasm</location>
    </subcellularLocation>
</comment>
<comment type="similarity">
    <text evidence="1">Belongs to the HisA/HisF family.</text>
</comment>
<accession>Q88R42</accession>
<evidence type="ECO:0000255" key="1">
    <source>
        <dbReference type="HAMAP-Rule" id="MF_01014"/>
    </source>
</evidence>
<gene>
    <name evidence="1" type="primary">hisA</name>
    <name type="ordered locus">PP_0292</name>
</gene>
<proteinExistence type="inferred from homology"/>